<protein>
    <recommendedName>
        <fullName evidence="1">2,3-bisphosphoglycerate-dependent phosphoglycerate mutase</fullName>
        <shortName evidence="1">BPG-dependent PGAM</shortName>
        <shortName evidence="1">PGAM</shortName>
        <shortName evidence="1">Phosphoglyceromutase</shortName>
        <shortName evidence="1">dPGM</shortName>
        <ecNumber evidence="1">5.4.2.11</ecNumber>
    </recommendedName>
</protein>
<sequence>MELVFIRHGQSEWNAKNLFTGWRDVKLSEQGLAEAAAAGKKLKENGYEFDIAFTSVLTRAIKTCNIVLEESDQLFVPQIKTWRLNERHYGRLQGLDKKQTAEQYGDEQVRIWRRSYDTLPPLLDKDDEFSAHKDRRYAHLPADVIPDGENLQVTLERVLPFWEDQIAPAILSGKRVLVAAHGNSLRALAKHIEGISDEDIMGLEIPTGQPLVYKLDDNLKVIEKFYL</sequence>
<name>GPMA_NEIMA</name>
<organism>
    <name type="scientific">Neisseria meningitidis serogroup A / serotype 4A (strain DSM 15465 / Z2491)</name>
    <dbReference type="NCBI Taxonomy" id="122587"/>
    <lineage>
        <taxon>Bacteria</taxon>
        <taxon>Pseudomonadati</taxon>
        <taxon>Pseudomonadota</taxon>
        <taxon>Betaproteobacteria</taxon>
        <taxon>Neisseriales</taxon>
        <taxon>Neisseriaceae</taxon>
        <taxon>Neisseria</taxon>
    </lineage>
</organism>
<proteinExistence type="inferred from homology"/>
<gene>
    <name evidence="1" type="primary">gpmA</name>
    <name type="synonym">gpm</name>
    <name type="ordered locus">NMA1801</name>
</gene>
<comment type="function">
    <text evidence="1">Catalyzes the interconversion of 2-phosphoglycerate and 3-phosphoglycerate.</text>
</comment>
<comment type="catalytic activity">
    <reaction evidence="1">
        <text>(2R)-2-phosphoglycerate = (2R)-3-phosphoglycerate</text>
        <dbReference type="Rhea" id="RHEA:15901"/>
        <dbReference type="ChEBI" id="CHEBI:58272"/>
        <dbReference type="ChEBI" id="CHEBI:58289"/>
        <dbReference type="EC" id="5.4.2.11"/>
    </reaction>
</comment>
<comment type="pathway">
    <text evidence="1">Carbohydrate degradation; glycolysis; pyruvate from D-glyceraldehyde 3-phosphate: step 3/5.</text>
</comment>
<comment type="subunit">
    <text evidence="1">Homodimer.</text>
</comment>
<comment type="similarity">
    <text evidence="1">Belongs to the phosphoglycerate mutase family. BPG-dependent PGAM subfamily.</text>
</comment>
<reference key="1">
    <citation type="journal article" date="2000" name="Nature">
        <title>Complete DNA sequence of a serogroup A strain of Neisseria meningitidis Z2491.</title>
        <authorList>
            <person name="Parkhill J."/>
            <person name="Achtman M."/>
            <person name="James K.D."/>
            <person name="Bentley S.D."/>
            <person name="Churcher C.M."/>
            <person name="Klee S.R."/>
            <person name="Morelli G."/>
            <person name="Basham D."/>
            <person name="Brown D."/>
            <person name="Chillingworth T."/>
            <person name="Davies R.M."/>
            <person name="Davis P."/>
            <person name="Devlin K."/>
            <person name="Feltwell T."/>
            <person name="Hamlin N."/>
            <person name="Holroyd S."/>
            <person name="Jagels K."/>
            <person name="Leather S."/>
            <person name="Moule S."/>
            <person name="Mungall K.L."/>
            <person name="Quail M.A."/>
            <person name="Rajandream M.A."/>
            <person name="Rutherford K.M."/>
            <person name="Simmonds M."/>
            <person name="Skelton J."/>
            <person name="Whitehead S."/>
            <person name="Spratt B.G."/>
            <person name="Barrell B.G."/>
        </authorList>
    </citation>
    <scope>NUCLEOTIDE SEQUENCE [LARGE SCALE GENOMIC DNA]</scope>
    <source>
        <strain>DSM 15465 / Z2491</strain>
    </source>
</reference>
<accession>Q9JTF2</accession>
<accession>A1IT12</accession>
<feature type="chain" id="PRO_0000179895" description="2,3-bisphosphoglycerate-dependent phosphoglycerate mutase">
    <location>
        <begin position="1"/>
        <end position="227"/>
    </location>
</feature>
<feature type="active site" description="Tele-phosphohistidine intermediate" evidence="1">
    <location>
        <position position="8"/>
    </location>
</feature>
<feature type="active site" description="Proton donor/acceptor" evidence="1">
    <location>
        <position position="86"/>
    </location>
</feature>
<feature type="binding site" evidence="1">
    <location>
        <begin position="7"/>
        <end position="14"/>
    </location>
    <ligand>
        <name>substrate</name>
    </ligand>
</feature>
<feature type="binding site" evidence="1">
    <location>
        <begin position="20"/>
        <end position="21"/>
    </location>
    <ligand>
        <name>substrate</name>
    </ligand>
</feature>
<feature type="binding site" evidence="1">
    <location>
        <position position="59"/>
    </location>
    <ligand>
        <name>substrate</name>
    </ligand>
</feature>
<feature type="binding site" evidence="1">
    <location>
        <begin position="86"/>
        <end position="89"/>
    </location>
    <ligand>
        <name>substrate</name>
    </ligand>
</feature>
<feature type="binding site" evidence="1">
    <location>
        <position position="97"/>
    </location>
    <ligand>
        <name>substrate</name>
    </ligand>
</feature>
<feature type="binding site" evidence="1">
    <location>
        <begin position="113"/>
        <end position="114"/>
    </location>
    <ligand>
        <name>substrate</name>
    </ligand>
</feature>
<feature type="binding site" evidence="1">
    <location>
        <begin position="182"/>
        <end position="183"/>
    </location>
    <ligand>
        <name>substrate</name>
    </ligand>
</feature>
<feature type="site" description="Transition state stabilizer" evidence="1">
    <location>
        <position position="181"/>
    </location>
</feature>
<dbReference type="EC" id="5.4.2.11" evidence="1"/>
<dbReference type="EMBL" id="AL157959">
    <property type="protein sequence ID" value="CAM08924.1"/>
    <property type="molecule type" value="Genomic_DNA"/>
</dbReference>
<dbReference type="PIR" id="G81805">
    <property type="entry name" value="G81805"/>
</dbReference>
<dbReference type="RefSeq" id="WP_002229738.1">
    <property type="nucleotide sequence ID" value="NC_003116.1"/>
</dbReference>
<dbReference type="SMR" id="Q9JTF2"/>
<dbReference type="EnsemblBacteria" id="CAM08924">
    <property type="protein sequence ID" value="CAM08924"/>
    <property type="gene ID" value="NMA1801"/>
</dbReference>
<dbReference type="KEGG" id="nma:NMA1801"/>
<dbReference type="HOGENOM" id="CLU_033323_1_5_4"/>
<dbReference type="UniPathway" id="UPA00109">
    <property type="reaction ID" value="UER00186"/>
</dbReference>
<dbReference type="Proteomes" id="UP000000626">
    <property type="component" value="Chromosome"/>
</dbReference>
<dbReference type="GO" id="GO:0004619">
    <property type="term" value="F:phosphoglycerate mutase activity"/>
    <property type="evidence" value="ECO:0007669"/>
    <property type="project" value="UniProtKB-EC"/>
</dbReference>
<dbReference type="GO" id="GO:0006094">
    <property type="term" value="P:gluconeogenesis"/>
    <property type="evidence" value="ECO:0007669"/>
    <property type="project" value="UniProtKB-UniRule"/>
</dbReference>
<dbReference type="GO" id="GO:0006096">
    <property type="term" value="P:glycolytic process"/>
    <property type="evidence" value="ECO:0007669"/>
    <property type="project" value="UniProtKB-UniRule"/>
</dbReference>
<dbReference type="CDD" id="cd07067">
    <property type="entry name" value="HP_PGM_like"/>
    <property type="match status" value="1"/>
</dbReference>
<dbReference type="FunFam" id="3.40.50.1240:FF:000003">
    <property type="entry name" value="2,3-bisphosphoglycerate-dependent phosphoglycerate mutase"/>
    <property type="match status" value="1"/>
</dbReference>
<dbReference type="Gene3D" id="3.40.50.1240">
    <property type="entry name" value="Phosphoglycerate mutase-like"/>
    <property type="match status" value="1"/>
</dbReference>
<dbReference type="HAMAP" id="MF_01039">
    <property type="entry name" value="PGAM_GpmA"/>
    <property type="match status" value="1"/>
</dbReference>
<dbReference type="InterPro" id="IPR013078">
    <property type="entry name" value="His_Pase_superF_clade-1"/>
</dbReference>
<dbReference type="InterPro" id="IPR029033">
    <property type="entry name" value="His_PPase_superfam"/>
</dbReference>
<dbReference type="InterPro" id="IPR005952">
    <property type="entry name" value="Phosphogly_mut1"/>
</dbReference>
<dbReference type="NCBIfam" id="TIGR01258">
    <property type="entry name" value="pgm_1"/>
    <property type="match status" value="1"/>
</dbReference>
<dbReference type="NCBIfam" id="NF010713">
    <property type="entry name" value="PRK14115.1"/>
    <property type="match status" value="1"/>
</dbReference>
<dbReference type="NCBIfam" id="NF010716">
    <property type="entry name" value="PRK14118.1"/>
    <property type="match status" value="1"/>
</dbReference>
<dbReference type="PANTHER" id="PTHR11931">
    <property type="entry name" value="PHOSPHOGLYCERATE MUTASE"/>
    <property type="match status" value="1"/>
</dbReference>
<dbReference type="Pfam" id="PF00300">
    <property type="entry name" value="His_Phos_1"/>
    <property type="match status" value="2"/>
</dbReference>
<dbReference type="PIRSF" id="PIRSF000709">
    <property type="entry name" value="6PFK_2-Ptase"/>
    <property type="match status" value="1"/>
</dbReference>
<dbReference type="SMART" id="SM00855">
    <property type="entry name" value="PGAM"/>
    <property type="match status" value="1"/>
</dbReference>
<dbReference type="SUPFAM" id="SSF53254">
    <property type="entry name" value="Phosphoglycerate mutase-like"/>
    <property type="match status" value="1"/>
</dbReference>
<keyword id="KW-0312">Gluconeogenesis</keyword>
<keyword id="KW-0324">Glycolysis</keyword>
<keyword id="KW-0413">Isomerase</keyword>
<evidence type="ECO:0000255" key="1">
    <source>
        <dbReference type="HAMAP-Rule" id="MF_01039"/>
    </source>
</evidence>